<comment type="function">
    <text evidence="1">In elementary bodies (EBs, the infectious stage, which is able to survive outside the host cell) provides the structural integrity of the outer envelope through disulfide cross-links with the small cysteine-rich protein and the large cysteine-rich periplasmic protein. It has been described in publications as the Sarkosyl-insoluble COMC (Chlamydia outer membrane complex), and serves as the functional equivalent of peptidoglycan (By similarity).</text>
</comment>
<comment type="function">
    <text evidence="1">Permits diffusion of specific solutes through the outer membrane.</text>
</comment>
<comment type="subunit">
    <text>Part of a disulfide cross-linked outer membrane complex (COMC) composed of the major outer membrane porin (MOMP), the small cysteine-rich protein (OmcA) and the large cysteine-rich periplasmic protein (OmcB).</text>
</comment>
<comment type="subcellular location">
    <subcellularLocation>
        <location evidence="1">Cell outer membrane</location>
        <topology evidence="1">Multi-pass membrane protein</topology>
    </subcellularLocation>
</comment>
<comment type="developmental stage">
    <text>It is present but some of the disulfide bonds are reduced in reticulate bodies (RBs).</text>
</comment>
<comment type="similarity">
    <text evidence="2">Belongs to the chlamydial porin (CP) (TC 1.B.2) family.</text>
</comment>
<comment type="caution">
    <text evidence="2">Was originally (PubMed:1937036, PubMed:1718870) thought to originate from Chlamydia trachomatis.</text>
</comment>
<sequence>MKKLLKSVLAFAVLGSASSLHALPVGNPAEPSLMIDGILWEGFGGDPCDPCTTWCDAISLRLGYYGDFVFDRVLKTDVNKQFEMGAAPTGDADLTTAPTPASRENPAYGKHMQDAEMFTNAAYMALNIWDRFDVFCTLGATSGYLKGNSAAFNLVGLFGRDETAVAADDIPNVSLSQAVVELYTDTAFAWSVGARAALWECGCATLGASFQYAQSKPKVEELNVLCNAAEFTINKPKGYVGQEFPLNIKAGTVSATDTKDASIDYHEWQASLALSYRLNMFTPYIGVKWSRASFDADTIRIAQPKLETSILKMTTWNPTISGSGIDVDTKITDTLQIVSLQLNKMKSRKSCGLAIGTTIVDADKYAVTVETRLIDERAAHVNAQFRF</sequence>
<gene>
    <name type="primary">ompA</name>
    <name type="synonym">omp1</name>
    <name type="ordered locus">TC_0052</name>
</gene>
<protein>
    <recommendedName>
        <fullName>Major outer membrane porin</fullName>
        <shortName>MOMP</shortName>
    </recommendedName>
</protein>
<proteinExistence type="evidence at transcript level"/>
<evidence type="ECO:0000250" key="1"/>
<evidence type="ECO:0000305" key="2"/>
<reference key="1">
    <citation type="journal article" date="1991" name="Gene">
        <title>Sequence of the gene encoding the major outer membrane protein of the mouse pneumonitis biovar of Chlamydia trachomatis.</title>
        <authorList>
            <person name="Fielder T.J."/>
            <person name="Pal S."/>
            <person name="Peterson E.M."/>
            <person name="de la Maza L.M."/>
        </authorList>
    </citation>
    <scope>NUCLEOTIDE SEQUENCE [GENOMIC DNA]</scope>
    <source>
        <strain>MoPn</strain>
    </source>
</reference>
<reference key="2">
    <citation type="journal article" date="1993" name="Mol. Biol. Evol.">
        <title>Comparison of the major outer-membrane protein (MOMP) gene of mouse pneumonitis (MoPn) and hamster SFPD strains of Chlamydia trachomatis with other Chlamydia strains.</title>
        <authorList>
            <person name="Zhang Y.-X."/>
            <person name="Fox J.G."/>
            <person name="Ho Y."/>
            <person name="Zhang L."/>
            <person name="Stills H.F. Jr."/>
            <person name="Smith T.F."/>
        </authorList>
    </citation>
    <scope>NUCLEOTIDE SEQUENCE [GENOMIC DNA]</scope>
    <source>
        <strain>MoPn</strain>
    </source>
</reference>
<reference key="3">
    <citation type="book" date="1992" name="Proceedings of the European society for chlamydia research and the second international symposium of Uppsala university centre for std research">
        <title>Chlamydia trachomatis mouse biovar: major outer membrane protein gene.</title>
        <editorList>
            <person name="Mardh P.A."/>
            <person name="la Placa M."/>
            <person name="Ward M."/>
        </editorList>
        <authorList>
            <person name="Carter M.W."/>
            <person name="Giles I."/>
            <person name="Everson J.S."/>
            <person name="Clarke I.N."/>
        </authorList>
    </citation>
    <scope>NUCLEOTIDE SEQUENCE [GENOMIC DNA]</scope>
    <source>
        <strain>MoPn / Nigg II</strain>
    </source>
</reference>
<reference key="4">
    <citation type="journal article" date="2000" name="Nucleic Acids Res.">
        <title>Genome sequences of Chlamydia trachomatis MoPn and Chlamydia pneumoniae AR39.</title>
        <authorList>
            <person name="Read T.D."/>
            <person name="Brunham R.C."/>
            <person name="Shen C."/>
            <person name="Gill S.R."/>
            <person name="Heidelberg J.F."/>
            <person name="White O."/>
            <person name="Hickey E.K."/>
            <person name="Peterson J.D."/>
            <person name="Utterback T.R."/>
            <person name="Berry K.J."/>
            <person name="Bass S."/>
            <person name="Linher K.D."/>
            <person name="Weidman J.F."/>
            <person name="Khouri H.M."/>
            <person name="Craven B."/>
            <person name="Bowman C."/>
            <person name="Dodson R.J."/>
            <person name="Gwinn M.L."/>
            <person name="Nelson W.C."/>
            <person name="DeBoy R.T."/>
            <person name="Kolonay J.F."/>
            <person name="McClarty G."/>
            <person name="Salzberg S.L."/>
            <person name="Eisen J.A."/>
            <person name="Fraser C.M."/>
        </authorList>
    </citation>
    <scope>NUCLEOTIDE SEQUENCE [LARGE SCALE GENOMIC DNA]</scope>
    <source>
        <strain>MoPn / Nigg</strain>
    </source>
</reference>
<reference key="5">
    <citation type="journal article" date="1993" name="J. Bacteriol.">
        <title>Structures of and allelic diversity and relationships among the major outer membrane protein (ompA) genes of the four chlamydial species.</title>
        <authorList>
            <person name="Kaltenboeck B."/>
            <person name="Kousoulas K.G."/>
            <person name="Storz J."/>
        </authorList>
    </citation>
    <scope>NUCLEOTIDE SEQUENCE [GENOMIC DNA] OF 37-375</scope>
    <source>
        <strain>MoPn</strain>
    </source>
</reference>
<reference key="6">
    <citation type="journal article" date="1991" name="Infect. Immun.">
        <title>Functional and structural mapping of Chlamydia trachomatis species-specific major outer membrane protein epitopes by use of neutralizing monoclonal antibodies.</title>
        <authorList>
            <person name="Peterson E.M."/>
            <person name="Cheng X."/>
            <person name="Markoff B.A."/>
            <person name="Fielder T.J."/>
            <person name="de la Maza L.M."/>
        </authorList>
    </citation>
    <scope>NUCLEOTIDE SEQUENCE [GENOMIC DNA] OF 314-322</scope>
    <scope>EPITOPE MAPPING</scope>
    <source>
        <strain>MoPn / Nigg</strain>
    </source>
</reference>
<feature type="signal peptide" evidence="1">
    <location>
        <begin position="1"/>
        <end position="22"/>
    </location>
</feature>
<feature type="chain" id="PRO_0000020139" description="Major outer membrane porin">
    <location>
        <begin position="23"/>
        <end position="387"/>
    </location>
</feature>
<feature type="sequence conflict" description="In Ref. 5; AAD29101." evidence="2" ref="5">
    <original>F</original>
    <variation>Y</variation>
    <location>
        <position position="118"/>
    </location>
</feature>
<feature type="sequence conflict" description="In Ref. 5; AAD29101." evidence="2" ref="5">
    <original>Y</original>
    <variation>F</variation>
    <location>
        <position position="123"/>
    </location>
</feature>
<feature type="sequence conflict" description="In Ref. 1; AAA23144." evidence="2" ref="1">
    <original>L</original>
    <variation>F</variation>
    <location>
        <position position="198"/>
    </location>
</feature>
<feature type="sequence conflict" description="In Ref. 1; AAA23144." evidence="2" ref="1">
    <original>A</original>
    <variation>P</variation>
    <location>
        <position position="204"/>
    </location>
</feature>
<organism>
    <name type="scientific">Chlamydia muridarum (strain MoPn / Nigg)</name>
    <dbReference type="NCBI Taxonomy" id="243161"/>
    <lineage>
        <taxon>Bacteria</taxon>
        <taxon>Pseudomonadati</taxon>
        <taxon>Chlamydiota</taxon>
        <taxon>Chlamydiia</taxon>
        <taxon>Chlamydiales</taxon>
        <taxon>Chlamydiaceae</taxon>
        <taxon>Chlamydia/Chlamydophila group</taxon>
        <taxon>Chlamydia</taxon>
    </lineage>
</organism>
<name>MOMPM_CHLMU</name>
<keyword id="KW-0998">Cell outer membrane</keyword>
<keyword id="KW-0133">Cell shape</keyword>
<keyword id="KW-1015">Disulfide bond</keyword>
<keyword id="KW-0406">Ion transport</keyword>
<keyword id="KW-0472">Membrane</keyword>
<keyword id="KW-0626">Porin</keyword>
<keyword id="KW-0732">Signal</keyword>
<keyword id="KW-0812">Transmembrane</keyword>
<keyword id="KW-1134">Transmembrane beta strand</keyword>
<keyword id="KW-0813">Transport</keyword>
<accession>P75024</accession>
<accession>Q04063</accession>
<accession>Q9R635</accession>
<accession>Q9X718</accession>
<dbReference type="EMBL" id="M64171">
    <property type="protein sequence ID" value="AAA23144.1"/>
    <property type="molecule type" value="Genomic_DNA"/>
</dbReference>
<dbReference type="EMBL" id="U60196">
    <property type="protein sequence ID" value="AAB07068.1"/>
    <property type="molecule type" value="Genomic_DNA"/>
</dbReference>
<dbReference type="EMBL" id="X63409">
    <property type="protein sequence ID" value="CAA45006.1"/>
    <property type="molecule type" value="Genomic_DNA"/>
</dbReference>
<dbReference type="EMBL" id="AE002160">
    <property type="protein sequence ID" value="AAF38941.1"/>
    <property type="molecule type" value="Genomic_DNA"/>
</dbReference>
<dbReference type="EMBL" id="M73044">
    <property type="protein sequence ID" value="AAD29101.1"/>
    <property type="molecule type" value="Genomic_DNA"/>
</dbReference>
<dbReference type="PIR" id="C81747">
    <property type="entry name" value="C81747"/>
</dbReference>
<dbReference type="PIR" id="JT0947">
    <property type="entry name" value="JT0947"/>
</dbReference>
<dbReference type="PIR" id="S16034">
    <property type="entry name" value="S16034"/>
</dbReference>
<dbReference type="RefSeq" id="WP_010232357.1">
    <property type="nucleotide sequence ID" value="NZ_CP027217.1"/>
</dbReference>
<dbReference type="RefSeq" id="WP_010904265.1">
    <property type="nucleotide sequence ID" value="NZ_CP063055.1"/>
</dbReference>
<dbReference type="GeneID" id="1245581"/>
<dbReference type="KEGG" id="cmu:TC_0052"/>
<dbReference type="eggNOG" id="ENOG502ZVFZ">
    <property type="taxonomic scope" value="Bacteria"/>
</dbReference>
<dbReference type="HOGENOM" id="CLU_693881_0_0_0"/>
<dbReference type="Proteomes" id="UP000000800">
    <property type="component" value="Chromosome"/>
</dbReference>
<dbReference type="GO" id="GO:0009279">
    <property type="term" value="C:cell outer membrane"/>
    <property type="evidence" value="ECO:0007669"/>
    <property type="project" value="UniProtKB-SubCell"/>
</dbReference>
<dbReference type="GO" id="GO:0046930">
    <property type="term" value="C:pore complex"/>
    <property type="evidence" value="ECO:0007669"/>
    <property type="project" value="UniProtKB-KW"/>
</dbReference>
<dbReference type="GO" id="GO:0015288">
    <property type="term" value="F:porin activity"/>
    <property type="evidence" value="ECO:0007669"/>
    <property type="project" value="UniProtKB-KW"/>
</dbReference>
<dbReference type="GO" id="GO:0005198">
    <property type="term" value="F:structural molecule activity"/>
    <property type="evidence" value="ECO:0007669"/>
    <property type="project" value="InterPro"/>
</dbReference>
<dbReference type="GO" id="GO:0006811">
    <property type="term" value="P:monoatomic ion transport"/>
    <property type="evidence" value="ECO:0007669"/>
    <property type="project" value="UniProtKB-KW"/>
</dbReference>
<dbReference type="GO" id="GO:0008360">
    <property type="term" value="P:regulation of cell shape"/>
    <property type="evidence" value="ECO:0007669"/>
    <property type="project" value="UniProtKB-KW"/>
</dbReference>
<dbReference type="InterPro" id="IPR000604">
    <property type="entry name" value="Major_OMP_Chlamydia"/>
</dbReference>
<dbReference type="Pfam" id="PF01308">
    <property type="entry name" value="Chlam_OMP"/>
    <property type="match status" value="1"/>
</dbReference>
<dbReference type="PRINTS" id="PR01334">
    <property type="entry name" value="CHLAMIDIAOMP"/>
</dbReference>